<protein>
    <recommendedName>
        <fullName evidence="1">7-cyano-7-deazaguanine synthase</fullName>
        <ecNumber evidence="1">6.3.4.20</ecNumber>
    </recommendedName>
    <alternativeName>
        <fullName evidence="1">7-cyano-7-carbaguanine synthase</fullName>
    </alternativeName>
    <alternativeName>
        <fullName evidence="1">PreQ(0) synthase</fullName>
    </alternativeName>
    <alternativeName>
        <fullName evidence="1">Queuosine biosynthesis protein QueC</fullName>
    </alternativeName>
</protein>
<name>QUEC_PELTS</name>
<accession>A5D2E1</accession>
<sequence length="221" mass="23985">MRSIVLLSGGLDSAVSLACSLQGGEVCLCLTFDYGQKAAEREKKAAAALAAHYKLRHRVIELPFLKEITSTALVSETSELPAAEEEELDENEASRSSAALVWVPNRNGVFINIAAAFAEAYRCDLVVTGFNREEAASFPDNSPEFVVAANASLSYSTLNKVRVASYTQGLNKTEIVKLGMNMGVPFDLIWSCYGGAEKMCRRCESCLRFIRAAKTAGLQLE</sequence>
<proteinExistence type="inferred from homology"/>
<dbReference type="EC" id="6.3.4.20" evidence="1"/>
<dbReference type="EMBL" id="AP009389">
    <property type="protein sequence ID" value="BAF59583.1"/>
    <property type="molecule type" value="Genomic_DNA"/>
</dbReference>
<dbReference type="SMR" id="A5D2E1"/>
<dbReference type="STRING" id="370438.PTH_1402"/>
<dbReference type="KEGG" id="pth:PTH_1402"/>
<dbReference type="eggNOG" id="COG0603">
    <property type="taxonomic scope" value="Bacteria"/>
</dbReference>
<dbReference type="HOGENOM" id="CLU_081854_1_0_9"/>
<dbReference type="UniPathway" id="UPA00391"/>
<dbReference type="Proteomes" id="UP000006556">
    <property type="component" value="Chromosome"/>
</dbReference>
<dbReference type="GO" id="GO:0005524">
    <property type="term" value="F:ATP binding"/>
    <property type="evidence" value="ECO:0007669"/>
    <property type="project" value="UniProtKB-UniRule"/>
</dbReference>
<dbReference type="GO" id="GO:0016879">
    <property type="term" value="F:ligase activity, forming carbon-nitrogen bonds"/>
    <property type="evidence" value="ECO:0007669"/>
    <property type="project" value="UniProtKB-UniRule"/>
</dbReference>
<dbReference type="GO" id="GO:0008270">
    <property type="term" value="F:zinc ion binding"/>
    <property type="evidence" value="ECO:0007669"/>
    <property type="project" value="UniProtKB-UniRule"/>
</dbReference>
<dbReference type="GO" id="GO:0008616">
    <property type="term" value="P:queuosine biosynthetic process"/>
    <property type="evidence" value="ECO:0007669"/>
    <property type="project" value="UniProtKB-UniRule"/>
</dbReference>
<dbReference type="CDD" id="cd01995">
    <property type="entry name" value="QueC-like"/>
    <property type="match status" value="1"/>
</dbReference>
<dbReference type="Gene3D" id="3.40.50.620">
    <property type="entry name" value="HUPs"/>
    <property type="match status" value="1"/>
</dbReference>
<dbReference type="HAMAP" id="MF_01633">
    <property type="entry name" value="QueC"/>
    <property type="match status" value="1"/>
</dbReference>
<dbReference type="InterPro" id="IPR018317">
    <property type="entry name" value="QueC"/>
</dbReference>
<dbReference type="InterPro" id="IPR014729">
    <property type="entry name" value="Rossmann-like_a/b/a_fold"/>
</dbReference>
<dbReference type="NCBIfam" id="TIGR00364">
    <property type="entry name" value="7-cyano-7-deazaguanine synthase QueC"/>
    <property type="match status" value="1"/>
</dbReference>
<dbReference type="PANTHER" id="PTHR42914">
    <property type="entry name" value="7-CYANO-7-DEAZAGUANINE SYNTHASE"/>
    <property type="match status" value="1"/>
</dbReference>
<dbReference type="PANTHER" id="PTHR42914:SF1">
    <property type="entry name" value="7-CYANO-7-DEAZAGUANINE SYNTHASE"/>
    <property type="match status" value="1"/>
</dbReference>
<dbReference type="Pfam" id="PF06508">
    <property type="entry name" value="QueC"/>
    <property type="match status" value="1"/>
</dbReference>
<dbReference type="PIRSF" id="PIRSF006293">
    <property type="entry name" value="ExsB"/>
    <property type="match status" value="1"/>
</dbReference>
<dbReference type="SUPFAM" id="SSF52402">
    <property type="entry name" value="Adenine nucleotide alpha hydrolases-like"/>
    <property type="match status" value="1"/>
</dbReference>
<reference key="1">
    <citation type="journal article" date="2008" name="Genome Res.">
        <title>The genome of Pelotomaculum thermopropionicum reveals niche-associated evolution in anaerobic microbiota.</title>
        <authorList>
            <person name="Kosaka T."/>
            <person name="Kato S."/>
            <person name="Shimoyama T."/>
            <person name="Ishii S."/>
            <person name="Abe T."/>
            <person name="Watanabe K."/>
        </authorList>
    </citation>
    <scope>NUCLEOTIDE SEQUENCE [LARGE SCALE GENOMIC DNA]</scope>
    <source>
        <strain>DSM 13744 / JCM 10971 / SI</strain>
    </source>
</reference>
<gene>
    <name evidence="1" type="primary">queC</name>
    <name type="ordered locus">PTH_1402</name>
</gene>
<organism>
    <name type="scientific">Pelotomaculum thermopropionicum (strain DSM 13744 / JCM 10971 / SI)</name>
    <dbReference type="NCBI Taxonomy" id="370438"/>
    <lineage>
        <taxon>Bacteria</taxon>
        <taxon>Bacillati</taxon>
        <taxon>Bacillota</taxon>
        <taxon>Clostridia</taxon>
        <taxon>Eubacteriales</taxon>
        <taxon>Desulfotomaculaceae</taxon>
        <taxon>Pelotomaculum</taxon>
    </lineage>
</organism>
<feature type="chain" id="PRO_1000088158" description="7-cyano-7-deazaguanine synthase">
    <location>
        <begin position="1"/>
        <end position="221"/>
    </location>
</feature>
<feature type="binding site" evidence="1">
    <location>
        <begin position="7"/>
        <end position="17"/>
    </location>
    <ligand>
        <name>ATP</name>
        <dbReference type="ChEBI" id="CHEBI:30616"/>
    </ligand>
</feature>
<feature type="binding site" evidence="1">
    <location>
        <position position="192"/>
    </location>
    <ligand>
        <name>Zn(2+)</name>
        <dbReference type="ChEBI" id="CHEBI:29105"/>
    </ligand>
</feature>
<feature type="binding site" evidence="1">
    <location>
        <position position="200"/>
    </location>
    <ligand>
        <name>Zn(2+)</name>
        <dbReference type="ChEBI" id="CHEBI:29105"/>
    </ligand>
</feature>
<feature type="binding site" evidence="1">
    <location>
        <position position="203"/>
    </location>
    <ligand>
        <name>Zn(2+)</name>
        <dbReference type="ChEBI" id="CHEBI:29105"/>
    </ligand>
</feature>
<feature type="binding site" evidence="1">
    <location>
        <position position="206"/>
    </location>
    <ligand>
        <name>Zn(2+)</name>
        <dbReference type="ChEBI" id="CHEBI:29105"/>
    </ligand>
</feature>
<keyword id="KW-0067">ATP-binding</keyword>
<keyword id="KW-0436">Ligase</keyword>
<keyword id="KW-0479">Metal-binding</keyword>
<keyword id="KW-0547">Nucleotide-binding</keyword>
<keyword id="KW-0671">Queuosine biosynthesis</keyword>
<keyword id="KW-1185">Reference proteome</keyword>
<keyword id="KW-0862">Zinc</keyword>
<evidence type="ECO:0000255" key="1">
    <source>
        <dbReference type="HAMAP-Rule" id="MF_01633"/>
    </source>
</evidence>
<comment type="function">
    <text evidence="1">Catalyzes the ATP-dependent conversion of 7-carboxy-7-deazaguanine (CDG) to 7-cyano-7-deazaguanine (preQ(0)).</text>
</comment>
<comment type="catalytic activity">
    <reaction evidence="1">
        <text>7-carboxy-7-deazaguanine + NH4(+) + ATP = 7-cyano-7-deazaguanine + ADP + phosphate + H2O + H(+)</text>
        <dbReference type="Rhea" id="RHEA:27982"/>
        <dbReference type="ChEBI" id="CHEBI:15377"/>
        <dbReference type="ChEBI" id="CHEBI:15378"/>
        <dbReference type="ChEBI" id="CHEBI:28938"/>
        <dbReference type="ChEBI" id="CHEBI:30616"/>
        <dbReference type="ChEBI" id="CHEBI:43474"/>
        <dbReference type="ChEBI" id="CHEBI:45075"/>
        <dbReference type="ChEBI" id="CHEBI:61036"/>
        <dbReference type="ChEBI" id="CHEBI:456216"/>
        <dbReference type="EC" id="6.3.4.20"/>
    </reaction>
</comment>
<comment type="cofactor">
    <cofactor evidence="1">
        <name>Zn(2+)</name>
        <dbReference type="ChEBI" id="CHEBI:29105"/>
    </cofactor>
    <text evidence="1">Binds 1 zinc ion per subunit.</text>
</comment>
<comment type="pathway">
    <text evidence="1">Purine metabolism; 7-cyano-7-deazaguanine biosynthesis.</text>
</comment>
<comment type="subunit">
    <text evidence="1">Homodimer.</text>
</comment>
<comment type="similarity">
    <text evidence="1">Belongs to the QueC family.</text>
</comment>